<reference key="1">
    <citation type="submission" date="1999-09" db="EMBL/GenBank/DDBJ databases">
        <title>A novel human cDNA, g20, that is homozygously deleted in small cell lung cancer and located to 3p21.3.</title>
        <authorList>
            <person name="Duh F.-M."/>
            <person name="Wei M.-H."/>
            <person name="Minna J.D."/>
            <person name="Lerman M.I."/>
        </authorList>
    </citation>
    <scope>NUCLEOTIDE SEQUENCE [MRNA] (ISOFORM 1)</scope>
    <scope>VARIANT VAL-162</scope>
</reference>
<reference key="2">
    <citation type="journal article" date="2004" name="Nat. Genet.">
        <title>Complete sequencing and characterization of 21,243 full-length human cDNAs.</title>
        <authorList>
            <person name="Ota T."/>
            <person name="Suzuki Y."/>
            <person name="Nishikawa T."/>
            <person name="Otsuki T."/>
            <person name="Sugiyama T."/>
            <person name="Irie R."/>
            <person name="Wakamatsu A."/>
            <person name="Hayashi K."/>
            <person name="Sato H."/>
            <person name="Nagai K."/>
            <person name="Kimura K."/>
            <person name="Makita H."/>
            <person name="Sekine M."/>
            <person name="Obayashi M."/>
            <person name="Nishi T."/>
            <person name="Shibahara T."/>
            <person name="Tanaka T."/>
            <person name="Ishii S."/>
            <person name="Yamamoto J."/>
            <person name="Saito K."/>
            <person name="Kawai Y."/>
            <person name="Isono Y."/>
            <person name="Nakamura Y."/>
            <person name="Nagahari K."/>
            <person name="Murakami K."/>
            <person name="Yasuda T."/>
            <person name="Iwayanagi T."/>
            <person name="Wagatsuma M."/>
            <person name="Shiratori A."/>
            <person name="Sudo H."/>
            <person name="Hosoiri T."/>
            <person name="Kaku Y."/>
            <person name="Kodaira H."/>
            <person name="Kondo H."/>
            <person name="Sugawara M."/>
            <person name="Takahashi M."/>
            <person name="Kanda K."/>
            <person name="Yokoi T."/>
            <person name="Furuya T."/>
            <person name="Kikkawa E."/>
            <person name="Omura Y."/>
            <person name="Abe K."/>
            <person name="Kamihara K."/>
            <person name="Katsuta N."/>
            <person name="Sato K."/>
            <person name="Tanikawa M."/>
            <person name="Yamazaki M."/>
            <person name="Ninomiya K."/>
            <person name="Ishibashi T."/>
            <person name="Yamashita H."/>
            <person name="Murakawa K."/>
            <person name="Fujimori K."/>
            <person name="Tanai H."/>
            <person name="Kimata M."/>
            <person name="Watanabe M."/>
            <person name="Hiraoka S."/>
            <person name="Chiba Y."/>
            <person name="Ishida S."/>
            <person name="Ono Y."/>
            <person name="Takiguchi S."/>
            <person name="Watanabe S."/>
            <person name="Yosida M."/>
            <person name="Hotuta T."/>
            <person name="Kusano J."/>
            <person name="Kanehori K."/>
            <person name="Takahashi-Fujii A."/>
            <person name="Hara H."/>
            <person name="Tanase T.-O."/>
            <person name="Nomura Y."/>
            <person name="Togiya S."/>
            <person name="Komai F."/>
            <person name="Hara R."/>
            <person name="Takeuchi K."/>
            <person name="Arita M."/>
            <person name="Imose N."/>
            <person name="Musashino K."/>
            <person name="Yuuki H."/>
            <person name="Oshima A."/>
            <person name="Sasaki N."/>
            <person name="Aotsuka S."/>
            <person name="Yoshikawa Y."/>
            <person name="Matsunawa H."/>
            <person name="Ichihara T."/>
            <person name="Shiohata N."/>
            <person name="Sano S."/>
            <person name="Moriya S."/>
            <person name="Momiyama H."/>
            <person name="Satoh N."/>
            <person name="Takami S."/>
            <person name="Terashima Y."/>
            <person name="Suzuki O."/>
            <person name="Nakagawa S."/>
            <person name="Senoh A."/>
            <person name="Mizoguchi H."/>
            <person name="Goto Y."/>
            <person name="Shimizu F."/>
            <person name="Wakebe H."/>
            <person name="Hishigaki H."/>
            <person name="Watanabe T."/>
            <person name="Sugiyama A."/>
            <person name="Takemoto M."/>
            <person name="Kawakami B."/>
            <person name="Yamazaki M."/>
            <person name="Watanabe K."/>
            <person name="Kumagai A."/>
            <person name="Itakura S."/>
            <person name="Fukuzumi Y."/>
            <person name="Fujimori Y."/>
            <person name="Komiyama M."/>
            <person name="Tashiro H."/>
            <person name="Tanigami A."/>
            <person name="Fujiwara T."/>
            <person name="Ono T."/>
            <person name="Yamada K."/>
            <person name="Fujii Y."/>
            <person name="Ozaki K."/>
            <person name="Hirao M."/>
            <person name="Ohmori Y."/>
            <person name="Kawabata A."/>
            <person name="Hikiji T."/>
            <person name="Kobatake N."/>
            <person name="Inagaki H."/>
            <person name="Ikema Y."/>
            <person name="Okamoto S."/>
            <person name="Okitani R."/>
            <person name="Kawakami T."/>
            <person name="Noguchi S."/>
            <person name="Itoh T."/>
            <person name="Shigeta K."/>
            <person name="Senba T."/>
            <person name="Matsumura K."/>
            <person name="Nakajima Y."/>
            <person name="Mizuno T."/>
            <person name="Morinaga M."/>
            <person name="Sasaki M."/>
            <person name="Togashi T."/>
            <person name="Oyama M."/>
            <person name="Hata H."/>
            <person name="Watanabe M."/>
            <person name="Komatsu T."/>
            <person name="Mizushima-Sugano J."/>
            <person name="Satoh T."/>
            <person name="Shirai Y."/>
            <person name="Takahashi Y."/>
            <person name="Nakagawa K."/>
            <person name="Okumura K."/>
            <person name="Nagase T."/>
            <person name="Nomura N."/>
            <person name="Kikuchi H."/>
            <person name="Masuho Y."/>
            <person name="Yamashita R."/>
            <person name="Nakai K."/>
            <person name="Yada T."/>
            <person name="Nakamura Y."/>
            <person name="Ohara O."/>
            <person name="Isogai T."/>
            <person name="Sugano S."/>
        </authorList>
    </citation>
    <scope>NUCLEOTIDE SEQUENCE [LARGE SCALE MRNA] (ISOFORM 2)</scope>
    <scope>VARIANT VAL-162</scope>
    <source>
        <tissue>Teratocarcinoma</tissue>
    </source>
</reference>
<reference key="3">
    <citation type="journal article" date="2007" name="BMC Genomics">
        <title>The full-ORF clone resource of the German cDNA consortium.</title>
        <authorList>
            <person name="Bechtel S."/>
            <person name="Rosenfelder H."/>
            <person name="Duda A."/>
            <person name="Schmidt C.P."/>
            <person name="Ernst U."/>
            <person name="Wellenreuther R."/>
            <person name="Mehrle A."/>
            <person name="Schuster C."/>
            <person name="Bahr A."/>
            <person name="Bloecker H."/>
            <person name="Heubner D."/>
            <person name="Hoerlein A."/>
            <person name="Michel G."/>
            <person name="Wedler H."/>
            <person name="Koehrer K."/>
            <person name="Ottenwaelder B."/>
            <person name="Poustka A."/>
            <person name="Wiemann S."/>
            <person name="Schupp I."/>
        </authorList>
    </citation>
    <scope>NUCLEOTIDE SEQUENCE [LARGE SCALE MRNA] (ISOFORM 1)</scope>
    <scope>VARIANT VAL-162</scope>
</reference>
<reference key="4">
    <citation type="journal article" date="2006" name="Nature">
        <title>The DNA sequence, annotation and analysis of human chromosome 3.</title>
        <authorList>
            <person name="Muzny D.M."/>
            <person name="Scherer S.E."/>
            <person name="Kaul R."/>
            <person name="Wang J."/>
            <person name="Yu J."/>
            <person name="Sudbrak R."/>
            <person name="Buhay C.J."/>
            <person name="Chen R."/>
            <person name="Cree A."/>
            <person name="Ding Y."/>
            <person name="Dugan-Rocha S."/>
            <person name="Gill R."/>
            <person name="Gunaratne P."/>
            <person name="Harris R.A."/>
            <person name="Hawes A.C."/>
            <person name="Hernandez J."/>
            <person name="Hodgson A.V."/>
            <person name="Hume J."/>
            <person name="Jackson A."/>
            <person name="Khan Z.M."/>
            <person name="Kovar-Smith C."/>
            <person name="Lewis L.R."/>
            <person name="Lozado R.J."/>
            <person name="Metzker M.L."/>
            <person name="Milosavljevic A."/>
            <person name="Miner G.R."/>
            <person name="Morgan M.B."/>
            <person name="Nazareth L.V."/>
            <person name="Scott G."/>
            <person name="Sodergren E."/>
            <person name="Song X.-Z."/>
            <person name="Steffen D."/>
            <person name="Wei S."/>
            <person name="Wheeler D.A."/>
            <person name="Wright M.W."/>
            <person name="Worley K.C."/>
            <person name="Yuan Y."/>
            <person name="Zhang Z."/>
            <person name="Adams C.Q."/>
            <person name="Ansari-Lari M.A."/>
            <person name="Ayele M."/>
            <person name="Brown M.J."/>
            <person name="Chen G."/>
            <person name="Chen Z."/>
            <person name="Clendenning J."/>
            <person name="Clerc-Blankenburg K.P."/>
            <person name="Chen R."/>
            <person name="Chen Z."/>
            <person name="Davis C."/>
            <person name="Delgado O."/>
            <person name="Dinh H.H."/>
            <person name="Dong W."/>
            <person name="Draper H."/>
            <person name="Ernst S."/>
            <person name="Fu G."/>
            <person name="Gonzalez-Garay M.L."/>
            <person name="Garcia D.K."/>
            <person name="Gillett W."/>
            <person name="Gu J."/>
            <person name="Hao B."/>
            <person name="Haugen E."/>
            <person name="Havlak P."/>
            <person name="He X."/>
            <person name="Hennig S."/>
            <person name="Hu S."/>
            <person name="Huang W."/>
            <person name="Jackson L.R."/>
            <person name="Jacob L.S."/>
            <person name="Kelly S.H."/>
            <person name="Kube M."/>
            <person name="Levy R."/>
            <person name="Li Z."/>
            <person name="Liu B."/>
            <person name="Liu J."/>
            <person name="Liu W."/>
            <person name="Lu J."/>
            <person name="Maheshwari M."/>
            <person name="Nguyen B.-V."/>
            <person name="Okwuonu G.O."/>
            <person name="Palmeiri A."/>
            <person name="Pasternak S."/>
            <person name="Perez L.M."/>
            <person name="Phelps K.A."/>
            <person name="Plopper F.J."/>
            <person name="Qiang B."/>
            <person name="Raymond C."/>
            <person name="Rodriguez R."/>
            <person name="Saenphimmachak C."/>
            <person name="Santibanez J."/>
            <person name="Shen H."/>
            <person name="Shen Y."/>
            <person name="Subramanian S."/>
            <person name="Tabor P.E."/>
            <person name="Verduzco D."/>
            <person name="Waldron L."/>
            <person name="Wang J."/>
            <person name="Wang J."/>
            <person name="Wang Q."/>
            <person name="Williams G.A."/>
            <person name="Wong G.K.-S."/>
            <person name="Yao Z."/>
            <person name="Zhang J."/>
            <person name="Zhang X."/>
            <person name="Zhao G."/>
            <person name="Zhou J."/>
            <person name="Zhou Y."/>
            <person name="Nelson D."/>
            <person name="Lehrach H."/>
            <person name="Reinhardt R."/>
            <person name="Naylor S.L."/>
            <person name="Yang H."/>
            <person name="Olson M."/>
            <person name="Weinstock G."/>
            <person name="Gibbs R.A."/>
        </authorList>
    </citation>
    <scope>NUCLEOTIDE SEQUENCE [LARGE SCALE GENOMIC DNA]</scope>
</reference>
<reference key="5">
    <citation type="journal article" date="2004" name="Genome Res.">
        <title>The status, quality, and expansion of the NIH full-length cDNA project: the Mammalian Gene Collection (MGC).</title>
        <authorList>
            <consortium name="The MGC Project Team"/>
        </authorList>
    </citation>
    <scope>NUCLEOTIDE SEQUENCE [LARGE SCALE MRNA] (ISOFORM 1)</scope>
    <scope>VARIANT VAL-162</scope>
    <source>
        <tissue>Brain</tissue>
    </source>
</reference>
<proteinExistence type="evidence at protein level"/>
<organism>
    <name type="scientific">Homo sapiens</name>
    <name type="common">Human</name>
    <dbReference type="NCBI Taxonomy" id="9606"/>
    <lineage>
        <taxon>Eukaryota</taxon>
        <taxon>Metazoa</taxon>
        <taxon>Chordata</taxon>
        <taxon>Craniata</taxon>
        <taxon>Vertebrata</taxon>
        <taxon>Euteleostomi</taxon>
        <taxon>Mammalia</taxon>
        <taxon>Eutheria</taxon>
        <taxon>Euarchontoglires</taxon>
        <taxon>Primates</taxon>
        <taxon>Haplorrhini</taxon>
        <taxon>Catarrhini</taxon>
        <taxon>Hominidae</taxon>
        <taxon>Homo</taxon>
    </lineage>
</organism>
<evidence type="ECO:0000255" key="1"/>
<evidence type="ECO:0000256" key="2">
    <source>
        <dbReference type="SAM" id="MobiDB-lite"/>
    </source>
</evidence>
<evidence type="ECO:0000269" key="3">
    <source>
    </source>
</evidence>
<evidence type="ECO:0000269" key="4">
    <source>
    </source>
</evidence>
<evidence type="ECO:0000269" key="5">
    <source>
    </source>
</evidence>
<evidence type="ECO:0000269" key="6">
    <source ref="1"/>
</evidence>
<evidence type="ECO:0000303" key="7">
    <source>
    </source>
</evidence>
<evidence type="ECO:0000305" key="8"/>
<protein>
    <recommendedName>
        <fullName>Uncharacterized protein C3orf18</fullName>
    </recommendedName>
    <alternativeName>
        <fullName>Protein G20</fullName>
    </alternativeName>
</protein>
<feature type="chain" id="PRO_0000228841" description="Uncharacterized protein C3orf18">
    <location>
        <begin position="1"/>
        <end position="162"/>
    </location>
</feature>
<feature type="transmembrane region" description="Helical" evidence="1">
    <location>
        <begin position="62"/>
        <end position="82"/>
    </location>
</feature>
<feature type="region of interest" description="Disordered" evidence="2">
    <location>
        <begin position="1"/>
        <end position="49"/>
    </location>
</feature>
<feature type="compositionally biased region" description="Polar residues" evidence="2">
    <location>
        <begin position="32"/>
        <end position="46"/>
    </location>
</feature>
<feature type="splice variant" id="VSP_044880" description="In isoform 2." evidence="7">
    <location>
        <begin position="59"/>
        <end position="78"/>
    </location>
</feature>
<feature type="sequence variant" id="VAR_025720" description="In dbSNP:rs386598.">
    <original>A</original>
    <variation>D</variation>
    <location>
        <position position="8"/>
    </location>
</feature>
<feature type="sequence variant" id="VAR_025721" description="In dbSNP:rs1034405." evidence="3 4 5 6">
    <original>A</original>
    <variation>V</variation>
    <location>
        <position position="162"/>
    </location>
</feature>
<dbReference type="EMBL" id="AF188706">
    <property type="protein sequence ID" value="AAF01050.1"/>
    <property type="molecule type" value="mRNA"/>
</dbReference>
<dbReference type="EMBL" id="AK308074">
    <property type="status" value="NOT_ANNOTATED_CDS"/>
    <property type="molecule type" value="mRNA"/>
</dbReference>
<dbReference type="EMBL" id="AL833938">
    <property type="protein sequence ID" value="CAD38793.1"/>
    <property type="molecule type" value="mRNA"/>
</dbReference>
<dbReference type="EMBL" id="AC096920">
    <property type="status" value="NOT_ANNOTATED_CDS"/>
    <property type="molecule type" value="Genomic_DNA"/>
</dbReference>
<dbReference type="EMBL" id="BC034766">
    <property type="protein sequence ID" value="AAH34766.1"/>
    <property type="molecule type" value="mRNA"/>
</dbReference>
<dbReference type="CCDS" id="CCDS2829.1">
    <molecule id="Q9UK00-1"/>
</dbReference>
<dbReference type="CCDS" id="CCDS54589.1">
    <molecule id="Q9UK00-2"/>
</dbReference>
<dbReference type="RefSeq" id="NP_001165211.1">
    <molecule id="Q9UK00-1"/>
    <property type="nucleotide sequence ID" value="NM_001171740.3"/>
</dbReference>
<dbReference type="RefSeq" id="NP_001165212.1">
    <molecule id="Q9UK00-1"/>
    <property type="nucleotide sequence ID" value="NM_001171741.3"/>
</dbReference>
<dbReference type="RefSeq" id="NP_001165214.2">
    <molecule id="Q9UK00-2"/>
    <property type="nucleotide sequence ID" value="NM_001171743.3"/>
</dbReference>
<dbReference type="RefSeq" id="NP_057294.2">
    <molecule id="Q9UK00-1"/>
    <property type="nucleotide sequence ID" value="NM_016210.5"/>
</dbReference>
<dbReference type="RefSeq" id="XP_011532092.1">
    <molecule id="Q9UK00-2"/>
    <property type="nucleotide sequence ID" value="XM_011533790.2"/>
</dbReference>
<dbReference type="RefSeq" id="XP_016862036.1">
    <molecule id="Q9UK00-2"/>
    <property type="nucleotide sequence ID" value="XM_017006547.2"/>
</dbReference>
<dbReference type="RefSeq" id="XP_047304205.1">
    <molecule id="Q9UK00-1"/>
    <property type="nucleotide sequence ID" value="XM_047448249.1"/>
</dbReference>
<dbReference type="RefSeq" id="XP_047304208.1">
    <molecule id="Q9UK00-2"/>
    <property type="nucleotide sequence ID" value="XM_047448252.1"/>
</dbReference>
<dbReference type="RefSeq" id="XP_054202705.1">
    <molecule id="Q9UK00-1"/>
    <property type="nucleotide sequence ID" value="XM_054346730.1"/>
</dbReference>
<dbReference type="RefSeq" id="XP_054202709.1">
    <molecule id="Q9UK00-2"/>
    <property type="nucleotide sequence ID" value="XM_054346734.1"/>
</dbReference>
<dbReference type="RefSeq" id="XP_054202710.1">
    <molecule id="Q9UK00-2"/>
    <property type="nucleotide sequence ID" value="XM_054346735.1"/>
</dbReference>
<dbReference type="RefSeq" id="XP_054202711.1">
    <molecule id="Q9UK00-2"/>
    <property type="nucleotide sequence ID" value="XM_054346736.1"/>
</dbReference>
<dbReference type="SMR" id="Q9UK00"/>
<dbReference type="BioGRID" id="119342">
    <property type="interactions" value="119"/>
</dbReference>
<dbReference type="FunCoup" id="Q9UK00">
    <property type="interactions" value="39"/>
</dbReference>
<dbReference type="IntAct" id="Q9UK00">
    <property type="interactions" value="112"/>
</dbReference>
<dbReference type="STRING" id="9606.ENSP00000349732"/>
<dbReference type="iPTMnet" id="Q9UK00"/>
<dbReference type="PhosphoSitePlus" id="Q9UK00"/>
<dbReference type="BioMuta" id="C3orf18"/>
<dbReference type="DMDM" id="317373334"/>
<dbReference type="MassIVE" id="Q9UK00"/>
<dbReference type="PaxDb" id="9606-ENSP00000349732"/>
<dbReference type="PeptideAtlas" id="Q9UK00"/>
<dbReference type="Antibodypedia" id="2263">
    <property type="antibodies" value="83 antibodies from 15 providers"/>
</dbReference>
<dbReference type="DNASU" id="51161"/>
<dbReference type="Ensembl" id="ENST00000357203.8">
    <molecule id="Q9UK00-1"/>
    <property type="protein sequence ID" value="ENSP00000349732.3"/>
    <property type="gene ID" value="ENSG00000088543.15"/>
</dbReference>
<dbReference type="Ensembl" id="ENST00000426034.5">
    <molecule id="Q9UK00-1"/>
    <property type="protein sequence ID" value="ENSP00000387606.1"/>
    <property type="gene ID" value="ENSG00000088543.15"/>
</dbReference>
<dbReference type="Ensembl" id="ENST00000441239.5">
    <molecule id="Q9UK00-2"/>
    <property type="protein sequence ID" value="ENSP00000414124.1"/>
    <property type="gene ID" value="ENSG00000088543.15"/>
</dbReference>
<dbReference type="Ensembl" id="ENST00000449241.5">
    <molecule id="Q9UK00-1"/>
    <property type="protein sequence ID" value="ENSP00000404913.1"/>
    <property type="gene ID" value="ENSG00000088543.15"/>
</dbReference>
<dbReference type="GeneID" id="51161"/>
<dbReference type="KEGG" id="hsa:51161"/>
<dbReference type="MANE-Select" id="ENST00000357203.8">
    <property type="protein sequence ID" value="ENSP00000349732.3"/>
    <property type="RefSeq nucleotide sequence ID" value="NM_016210.5"/>
    <property type="RefSeq protein sequence ID" value="NP_057294.2"/>
</dbReference>
<dbReference type="UCSC" id="uc003dar.4">
    <molecule id="Q9UK00-1"/>
    <property type="organism name" value="human"/>
</dbReference>
<dbReference type="AGR" id="HGNC:24837"/>
<dbReference type="CTD" id="51161"/>
<dbReference type="DisGeNET" id="51161"/>
<dbReference type="GeneCards" id="C3orf18"/>
<dbReference type="HGNC" id="HGNC:24837">
    <property type="gene designation" value="C3orf18"/>
</dbReference>
<dbReference type="HPA" id="ENSG00000088543">
    <property type="expression patterns" value="Tissue enhanced (brain)"/>
</dbReference>
<dbReference type="neXtProt" id="NX_Q9UK00"/>
<dbReference type="OpenTargets" id="ENSG00000088543"/>
<dbReference type="PharmGKB" id="PA134941482"/>
<dbReference type="VEuPathDB" id="HostDB:ENSG00000088543"/>
<dbReference type="eggNOG" id="ENOG502RZ00">
    <property type="taxonomic scope" value="Eukaryota"/>
</dbReference>
<dbReference type="GeneTree" id="ENSGT00410000025882"/>
<dbReference type="HOGENOM" id="CLU_134497_1_0_1"/>
<dbReference type="InParanoid" id="Q9UK00"/>
<dbReference type="OMA" id="MAMVLYI"/>
<dbReference type="OrthoDB" id="9941165at2759"/>
<dbReference type="PAN-GO" id="Q9UK00">
    <property type="GO annotations" value="0 GO annotations based on evolutionary models"/>
</dbReference>
<dbReference type="PhylomeDB" id="Q9UK00"/>
<dbReference type="TreeFam" id="TF332764"/>
<dbReference type="PathwayCommons" id="Q9UK00"/>
<dbReference type="BioGRID-ORCS" id="51161">
    <property type="hits" value="13 hits in 1141 CRISPR screens"/>
</dbReference>
<dbReference type="GenomeRNAi" id="51161"/>
<dbReference type="Pharos" id="Q9UK00">
    <property type="development level" value="Tbio"/>
</dbReference>
<dbReference type="PRO" id="PR:Q9UK00"/>
<dbReference type="Proteomes" id="UP000005640">
    <property type="component" value="Chromosome 3"/>
</dbReference>
<dbReference type="RNAct" id="Q9UK00">
    <property type="molecule type" value="protein"/>
</dbReference>
<dbReference type="Bgee" id="ENSG00000088543">
    <property type="expression patterns" value="Expressed in right hemisphere of cerebellum and 186 other cell types or tissues"/>
</dbReference>
<dbReference type="ExpressionAtlas" id="Q9UK00">
    <property type="expression patterns" value="baseline and differential"/>
</dbReference>
<dbReference type="GO" id="GO:0016020">
    <property type="term" value="C:membrane"/>
    <property type="evidence" value="ECO:0007669"/>
    <property type="project" value="UniProtKB-SubCell"/>
</dbReference>
<dbReference type="InterPro" id="IPR042351">
    <property type="entry name" value="C3orf18-like"/>
</dbReference>
<dbReference type="PANTHER" id="PTHR15868">
    <property type="entry name" value="SIMILAR TO RIKEN CDNA 6430571L13 GENE, SIMILAR TO G20 PROTEIN"/>
    <property type="match status" value="1"/>
</dbReference>
<dbReference type="PANTHER" id="PTHR15868:SF0">
    <property type="entry name" value="SIMILAR TO RIKEN CDNA 6430571L13 GENE_ SIMILAR TO G20 PROTEIN"/>
    <property type="match status" value="1"/>
</dbReference>
<accession>Q9UK00</accession>
<accession>C9JNP0</accession>
<sequence length="162" mass="17468">MNSRTASARGWFSSRPPTSESDLEPATDGPASETTTLSPEATTFNDTRIPDAAGGTAGVGTMLLSFGIITVIGLAVALVLYIRKKKRLEKLRHQLMPMYNFDPTEEQDELEQELLEHGRDAASVQAATSVQAMQGKTTLPSQGPLQRPSRLVFTDVANAIHA</sequence>
<gene>
    <name type="primary">C3orf18</name>
</gene>
<name>CC018_HUMAN</name>
<keyword id="KW-0025">Alternative splicing</keyword>
<keyword id="KW-0472">Membrane</keyword>
<keyword id="KW-1267">Proteomics identification</keyword>
<keyword id="KW-1185">Reference proteome</keyword>
<keyword id="KW-0812">Transmembrane</keyword>
<keyword id="KW-1133">Transmembrane helix</keyword>
<comment type="subcellular location">
    <subcellularLocation>
        <location evidence="8">Membrane</location>
        <topology evidence="8">Single-pass membrane protein</topology>
    </subcellularLocation>
</comment>
<comment type="alternative products">
    <event type="alternative splicing"/>
    <isoform>
        <id>Q9UK00-1</id>
        <name>1</name>
        <sequence type="displayed"/>
    </isoform>
    <isoform>
        <id>Q9UK00-2</id>
        <name>2</name>
        <sequence type="described" ref="VSP_044880"/>
    </isoform>
</comment>